<feature type="chain" id="PRO_0000167002" description="Probable glycine dehydrogenase (decarboxylating) subunit 2">
    <location>
        <begin position="1"/>
        <end position="524"/>
    </location>
</feature>
<feature type="modified residue" description="N6-(pyridoxal phosphate)lysine" evidence="1">
    <location>
        <position position="296"/>
    </location>
</feature>
<comment type="function">
    <text evidence="1">The glycine cleavage system catalyzes the degradation of glycine. The P protein binds the alpha-amino group of glycine through its pyridoxal phosphate cofactor; CO(2) is released and the remaining methylamine moiety is then transferred to the lipoamide cofactor of the H protein.</text>
</comment>
<comment type="catalytic activity">
    <reaction evidence="1">
        <text>N(6)-[(R)-lipoyl]-L-lysyl-[glycine-cleavage complex H protein] + glycine + H(+) = N(6)-[(R)-S(8)-aminomethyldihydrolipoyl]-L-lysyl-[glycine-cleavage complex H protein] + CO2</text>
        <dbReference type="Rhea" id="RHEA:24304"/>
        <dbReference type="Rhea" id="RHEA-COMP:10494"/>
        <dbReference type="Rhea" id="RHEA-COMP:10495"/>
        <dbReference type="ChEBI" id="CHEBI:15378"/>
        <dbReference type="ChEBI" id="CHEBI:16526"/>
        <dbReference type="ChEBI" id="CHEBI:57305"/>
        <dbReference type="ChEBI" id="CHEBI:83099"/>
        <dbReference type="ChEBI" id="CHEBI:83143"/>
        <dbReference type="EC" id="1.4.4.2"/>
    </reaction>
</comment>
<comment type="cofactor">
    <cofactor evidence="1">
        <name>pyridoxal 5'-phosphate</name>
        <dbReference type="ChEBI" id="CHEBI:597326"/>
    </cofactor>
</comment>
<comment type="subunit">
    <text evidence="1">The glycine cleavage system is composed of four proteins: P, T, L and H. In this organism, the P 'protein' is a heterodimer of two subunits.</text>
</comment>
<comment type="similarity">
    <text evidence="1">Belongs to the GcvP family. C-terminal subunit subfamily.</text>
</comment>
<organism>
    <name type="scientific">Caulobacter vibrioides (strain ATCC 19089 / CIP 103742 / CB 15)</name>
    <name type="common">Caulobacter crescentus</name>
    <dbReference type="NCBI Taxonomy" id="190650"/>
    <lineage>
        <taxon>Bacteria</taxon>
        <taxon>Pseudomonadati</taxon>
        <taxon>Pseudomonadota</taxon>
        <taxon>Alphaproteobacteria</taxon>
        <taxon>Caulobacterales</taxon>
        <taxon>Caulobacteraceae</taxon>
        <taxon>Caulobacter</taxon>
    </lineage>
</organism>
<protein>
    <recommendedName>
        <fullName evidence="1">Probable glycine dehydrogenase (decarboxylating) subunit 2</fullName>
        <ecNumber evidence="1">1.4.4.2</ecNumber>
    </recommendedName>
    <alternativeName>
        <fullName evidence="1">Glycine cleavage system P-protein subunit 2</fullName>
    </alternativeName>
    <alternativeName>
        <fullName evidence="1">Glycine decarboxylase subunit 2</fullName>
    </alternativeName>
    <alternativeName>
        <fullName evidence="1">Glycine dehydrogenase (aminomethyl-transferring) subunit 2</fullName>
    </alternativeName>
</protein>
<keyword id="KW-0560">Oxidoreductase</keyword>
<keyword id="KW-0663">Pyridoxal phosphate</keyword>
<keyword id="KW-1185">Reference proteome</keyword>
<evidence type="ECO:0000255" key="1">
    <source>
        <dbReference type="HAMAP-Rule" id="MF_00713"/>
    </source>
</evidence>
<proteinExistence type="inferred from homology"/>
<gene>
    <name evidence="1" type="primary">gcvPB</name>
    <name type="ordered locus">CC_3352</name>
</gene>
<name>GCSPB_CAUVC</name>
<accession>Q9A354</accession>
<reference key="1">
    <citation type="journal article" date="2001" name="Proc. Natl. Acad. Sci. U.S.A.">
        <title>Complete genome sequence of Caulobacter crescentus.</title>
        <authorList>
            <person name="Nierman W.C."/>
            <person name="Feldblyum T.V."/>
            <person name="Laub M.T."/>
            <person name="Paulsen I.T."/>
            <person name="Nelson K.E."/>
            <person name="Eisen J.A."/>
            <person name="Heidelberg J.F."/>
            <person name="Alley M.R.K."/>
            <person name="Ohta N."/>
            <person name="Maddock J.R."/>
            <person name="Potocka I."/>
            <person name="Nelson W.C."/>
            <person name="Newton A."/>
            <person name="Stephens C."/>
            <person name="Phadke N.D."/>
            <person name="Ely B."/>
            <person name="DeBoy R.T."/>
            <person name="Dodson R.J."/>
            <person name="Durkin A.S."/>
            <person name="Gwinn M.L."/>
            <person name="Haft D.H."/>
            <person name="Kolonay J.F."/>
            <person name="Smit J."/>
            <person name="Craven M.B."/>
            <person name="Khouri H.M."/>
            <person name="Shetty J."/>
            <person name="Berry K.J."/>
            <person name="Utterback T.R."/>
            <person name="Tran K."/>
            <person name="Wolf A.M."/>
            <person name="Vamathevan J.J."/>
            <person name="Ermolaeva M.D."/>
            <person name="White O."/>
            <person name="Salzberg S.L."/>
            <person name="Venter J.C."/>
            <person name="Shapiro L."/>
            <person name="Fraser C.M."/>
        </authorList>
    </citation>
    <scope>NUCLEOTIDE SEQUENCE [LARGE SCALE GENOMIC DNA]</scope>
    <source>
        <strain>ATCC 19089 / CIP 103742 / CB 15</strain>
    </source>
</reference>
<dbReference type="EC" id="1.4.4.2" evidence="1"/>
<dbReference type="EMBL" id="AE005673">
    <property type="protein sequence ID" value="AAK25314.1"/>
    <property type="molecule type" value="Genomic_DNA"/>
</dbReference>
<dbReference type="PIR" id="F87664">
    <property type="entry name" value="F87664"/>
</dbReference>
<dbReference type="RefSeq" id="NP_422146.1">
    <property type="nucleotide sequence ID" value="NC_002696.2"/>
</dbReference>
<dbReference type="SMR" id="Q9A354"/>
<dbReference type="STRING" id="190650.CC_3352"/>
<dbReference type="EnsemblBacteria" id="AAK25314">
    <property type="protein sequence ID" value="AAK25314"/>
    <property type="gene ID" value="CC_3352"/>
</dbReference>
<dbReference type="KEGG" id="ccr:CC_3352"/>
<dbReference type="PATRIC" id="fig|190650.5.peg.3358"/>
<dbReference type="eggNOG" id="COG1003">
    <property type="taxonomic scope" value="Bacteria"/>
</dbReference>
<dbReference type="HOGENOM" id="CLU_004620_5_0_5"/>
<dbReference type="BioCyc" id="CAULO:CC3352-MONOMER"/>
<dbReference type="Proteomes" id="UP000001816">
    <property type="component" value="Chromosome"/>
</dbReference>
<dbReference type="GO" id="GO:0005829">
    <property type="term" value="C:cytosol"/>
    <property type="evidence" value="ECO:0007669"/>
    <property type="project" value="TreeGrafter"/>
</dbReference>
<dbReference type="GO" id="GO:0005960">
    <property type="term" value="C:glycine cleavage complex"/>
    <property type="evidence" value="ECO:0007669"/>
    <property type="project" value="TreeGrafter"/>
</dbReference>
<dbReference type="GO" id="GO:0016594">
    <property type="term" value="F:glycine binding"/>
    <property type="evidence" value="ECO:0007669"/>
    <property type="project" value="TreeGrafter"/>
</dbReference>
<dbReference type="GO" id="GO:0004375">
    <property type="term" value="F:glycine dehydrogenase (decarboxylating) activity"/>
    <property type="evidence" value="ECO:0007669"/>
    <property type="project" value="UniProtKB-EC"/>
</dbReference>
<dbReference type="GO" id="GO:0030170">
    <property type="term" value="F:pyridoxal phosphate binding"/>
    <property type="evidence" value="ECO:0007669"/>
    <property type="project" value="TreeGrafter"/>
</dbReference>
<dbReference type="GO" id="GO:0019464">
    <property type="term" value="P:glycine decarboxylation via glycine cleavage system"/>
    <property type="evidence" value="ECO:0007669"/>
    <property type="project" value="UniProtKB-UniRule"/>
</dbReference>
<dbReference type="CDD" id="cd00613">
    <property type="entry name" value="GDC-P"/>
    <property type="match status" value="1"/>
</dbReference>
<dbReference type="FunFam" id="3.40.640.10:FF:000224">
    <property type="entry name" value="Probable glycine dehydrogenase (decarboxylating) subunit 2"/>
    <property type="match status" value="1"/>
</dbReference>
<dbReference type="Gene3D" id="6.20.440.10">
    <property type="match status" value="1"/>
</dbReference>
<dbReference type="Gene3D" id="3.90.1150.10">
    <property type="entry name" value="Aspartate Aminotransferase, domain 1"/>
    <property type="match status" value="1"/>
</dbReference>
<dbReference type="Gene3D" id="3.40.640.10">
    <property type="entry name" value="Type I PLP-dependent aspartate aminotransferase-like (Major domain)"/>
    <property type="match status" value="1"/>
</dbReference>
<dbReference type="HAMAP" id="MF_00713">
    <property type="entry name" value="GcvPB"/>
    <property type="match status" value="1"/>
</dbReference>
<dbReference type="InterPro" id="IPR000192">
    <property type="entry name" value="Aminotrans_V_dom"/>
</dbReference>
<dbReference type="InterPro" id="IPR023012">
    <property type="entry name" value="GcvPB"/>
</dbReference>
<dbReference type="InterPro" id="IPR049316">
    <property type="entry name" value="GDC-P_C"/>
</dbReference>
<dbReference type="InterPro" id="IPR020581">
    <property type="entry name" value="GDC_P"/>
</dbReference>
<dbReference type="InterPro" id="IPR015424">
    <property type="entry name" value="PyrdxlP-dep_Trfase"/>
</dbReference>
<dbReference type="InterPro" id="IPR015421">
    <property type="entry name" value="PyrdxlP-dep_Trfase_major"/>
</dbReference>
<dbReference type="InterPro" id="IPR015422">
    <property type="entry name" value="PyrdxlP-dep_Trfase_small"/>
</dbReference>
<dbReference type="NCBIfam" id="NF003346">
    <property type="entry name" value="PRK04366.1"/>
    <property type="match status" value="1"/>
</dbReference>
<dbReference type="PANTHER" id="PTHR11773:SF1">
    <property type="entry name" value="GLYCINE DEHYDROGENASE (DECARBOXYLATING), MITOCHONDRIAL"/>
    <property type="match status" value="1"/>
</dbReference>
<dbReference type="PANTHER" id="PTHR11773">
    <property type="entry name" value="GLYCINE DEHYDROGENASE, DECARBOXYLATING"/>
    <property type="match status" value="1"/>
</dbReference>
<dbReference type="Pfam" id="PF00266">
    <property type="entry name" value="Aminotran_5"/>
    <property type="match status" value="1"/>
</dbReference>
<dbReference type="Pfam" id="PF21478">
    <property type="entry name" value="GcvP2_C"/>
    <property type="match status" value="1"/>
</dbReference>
<dbReference type="SUPFAM" id="SSF53383">
    <property type="entry name" value="PLP-dependent transferases"/>
    <property type="match status" value="1"/>
</dbReference>
<sequence length="524" mass="55993">MNNVGRPTRPEAANDAANGHETLTGARGLLQDEALIFELDGWNKTGVDLPPVTAAPSSDLNGLLRDAPIGLPGLSEPETVRHYVRLSQKNHAIDLALYPLGSCTMKHNPRLNEKMARLPGFSDIHPLQPQSTVQGALELMDRLAHWLKTLTGMPAVALTPKAGAHGELCGLLAIRAAHEAAGNGHRKTVLAPTSAHGTNPATAAFVGYTVVEIAQTEDGRVDLADLESKLGDHVAAIMVTNPNTCGLFERDVVEIARLTHAAGAYFYCDGANFNAIVGRVRPGDLGVDAMHINLHKTFSTPHGGGGPGAGPVVLSEALAPFAPTPWLTHGDNGFELAEHAGDDDAKTAFGRMSAFHGQMGMYVRAYAYMLSHGADGLRQVAEDAVLNANYIKAQLKDVMSPAFPEGPCMHEALFDDSWLEGTGVTTLDFAKAMIDEGFHPMTMYFPLVVHGAMLIEPTETESKHELDRFIAALRALAGAAKAGDTERFKGAPFHAPLRRLDETQAARKPRLRWKPVAAAPLAAE</sequence>